<evidence type="ECO:0000255" key="1">
    <source>
        <dbReference type="HAMAP-Rule" id="MF_02129"/>
    </source>
</evidence>
<evidence type="ECO:0000312" key="2">
    <source>
        <dbReference type="EMBL" id="BAG23478.1"/>
    </source>
</evidence>
<protein>
    <recommendedName>
        <fullName evidence="1">L-carnitine dehydrogenase</fullName>
        <shortName evidence="1">CDH</shortName>
        <shortName evidence="1">L-CDH</shortName>
        <ecNumber evidence="1">1.1.1.108</ecNumber>
    </recommendedName>
</protein>
<reference key="1">
    <citation type="journal article" date="2008" name="J. Bacteriol.">
        <title>Genome sequence of the streptomycin-producing microorganism Streptomyces griseus IFO 13350.</title>
        <authorList>
            <person name="Ohnishi Y."/>
            <person name="Ishikawa J."/>
            <person name="Hara H."/>
            <person name="Suzuki H."/>
            <person name="Ikenoya M."/>
            <person name="Ikeda H."/>
            <person name="Yamashita A."/>
            <person name="Hattori M."/>
            <person name="Horinouchi S."/>
        </authorList>
    </citation>
    <scope>NUCLEOTIDE SEQUENCE [LARGE SCALE GENOMIC DNA]</scope>
    <source>
        <strain>JCM 4626 / CBS 651.72 / NBRC 13350 / KCC S-0626 / ISP 5235</strain>
    </source>
</reference>
<organism>
    <name type="scientific">Streptomyces griseus subsp. griseus (strain JCM 4626 / CBS 651.72 / NBRC 13350 / KCC S-0626 / ISP 5235)</name>
    <dbReference type="NCBI Taxonomy" id="455632"/>
    <lineage>
        <taxon>Bacteria</taxon>
        <taxon>Bacillati</taxon>
        <taxon>Actinomycetota</taxon>
        <taxon>Actinomycetes</taxon>
        <taxon>Kitasatosporales</taxon>
        <taxon>Streptomycetaceae</taxon>
        <taxon>Streptomyces</taxon>
    </lineage>
</organism>
<accession>B1VLT7</accession>
<proteinExistence type="inferred from homology"/>
<sequence length="335" mass="35227">MTVTPSAATTDGPAAPCAPEDVRRVACVGTGVIGGGWAAHFLARGYDVTAWDPAPDAAVRLRRLIAAAWPALEQLGLAEGASQDRLTVTSTLEEAVADAQFVQESAPEKLDLKRDLLARLDAATPAGTVIASSTSGYPMTDMQTEAADPGRLVVGHPFNPPYLIPLVEVVGGVRTAPAAVDWAARFYAVAGKSVITMEREVPGFIANRLQEALWREALHMVANGEATVAEIDASITEGPGLRWAVMGPMLTFALAGGEGGMAHMLDHFGPSLTSPWTRLEAPELDRALYDAVVAGCEEAADGRSIADLVAERDRGVIDVLRATGRLPRSAEEAAR</sequence>
<comment type="function">
    <text evidence="1">Catalyzes the NAD(+)-dependent oxidation of L-carnitine to 3-dehydrocarnitine.</text>
</comment>
<comment type="catalytic activity">
    <reaction evidence="1">
        <text>carnitine + NAD(+) = 3-dehydrocarnitine + NADH + H(+)</text>
        <dbReference type="Rhea" id="RHEA:19265"/>
        <dbReference type="ChEBI" id="CHEBI:15378"/>
        <dbReference type="ChEBI" id="CHEBI:17126"/>
        <dbReference type="ChEBI" id="CHEBI:57540"/>
        <dbReference type="ChEBI" id="CHEBI:57885"/>
        <dbReference type="ChEBI" id="CHEBI:57945"/>
        <dbReference type="EC" id="1.1.1.108"/>
    </reaction>
</comment>
<comment type="pathway">
    <text evidence="1">Amine and polyamine metabolism; carnitine metabolism.</text>
</comment>
<comment type="subunit">
    <text evidence="1">Homodimer.</text>
</comment>
<comment type="subcellular location">
    <subcellularLocation>
        <location evidence="1">Cytoplasm</location>
    </subcellularLocation>
</comment>
<comment type="similarity">
    <text evidence="1">Belongs to the 3-hydroxyacyl-CoA dehydrogenase family. L-carnitine dehydrogenase subfamily.</text>
</comment>
<keyword id="KW-0963">Cytoplasm</keyword>
<keyword id="KW-0520">NAD</keyword>
<keyword id="KW-0560">Oxidoreductase</keyword>
<name>LCDH_STRGG</name>
<gene>
    <name evidence="2" type="ordered locus">SGR_6649</name>
</gene>
<dbReference type="EC" id="1.1.1.108" evidence="1"/>
<dbReference type="EMBL" id="AP009493">
    <property type="protein sequence ID" value="BAG23478.1"/>
    <property type="molecule type" value="Genomic_DNA"/>
</dbReference>
<dbReference type="RefSeq" id="WP_012382098.1">
    <property type="nucleotide sequence ID" value="NC_010572.1"/>
</dbReference>
<dbReference type="SMR" id="B1VLT7"/>
<dbReference type="KEGG" id="sgr:SGR_6649"/>
<dbReference type="PATRIC" id="fig|455632.4.peg.6824"/>
<dbReference type="eggNOG" id="COG1250">
    <property type="taxonomic scope" value="Bacteria"/>
</dbReference>
<dbReference type="HOGENOM" id="CLU_009834_0_1_11"/>
<dbReference type="UniPathway" id="UPA00117"/>
<dbReference type="Proteomes" id="UP000001685">
    <property type="component" value="Chromosome"/>
</dbReference>
<dbReference type="GO" id="GO:0005737">
    <property type="term" value="C:cytoplasm"/>
    <property type="evidence" value="ECO:0007669"/>
    <property type="project" value="UniProtKB-SubCell"/>
</dbReference>
<dbReference type="GO" id="GO:0047728">
    <property type="term" value="F:carnitine 3-dehydrogenase activity"/>
    <property type="evidence" value="ECO:0007669"/>
    <property type="project" value="UniProtKB-UniRule"/>
</dbReference>
<dbReference type="GO" id="GO:0070403">
    <property type="term" value="F:NAD+ binding"/>
    <property type="evidence" value="ECO:0007669"/>
    <property type="project" value="InterPro"/>
</dbReference>
<dbReference type="GO" id="GO:0009437">
    <property type="term" value="P:carnitine metabolic process"/>
    <property type="evidence" value="ECO:0007669"/>
    <property type="project" value="UniProtKB-UniRule"/>
</dbReference>
<dbReference type="GO" id="GO:0009056">
    <property type="term" value="P:catabolic process"/>
    <property type="evidence" value="ECO:0007669"/>
    <property type="project" value="UniProtKB-ARBA"/>
</dbReference>
<dbReference type="GO" id="GO:0006631">
    <property type="term" value="P:fatty acid metabolic process"/>
    <property type="evidence" value="ECO:0007669"/>
    <property type="project" value="InterPro"/>
</dbReference>
<dbReference type="Gene3D" id="1.10.1040.10">
    <property type="entry name" value="N-(1-d-carboxylethyl)-l-norvaline Dehydrogenase, domain 2"/>
    <property type="match status" value="1"/>
</dbReference>
<dbReference type="Gene3D" id="3.40.50.720">
    <property type="entry name" value="NAD(P)-binding Rossmann-like Domain"/>
    <property type="match status" value="1"/>
</dbReference>
<dbReference type="HAMAP" id="MF_02129">
    <property type="entry name" value="L_carnitine_dehydrog"/>
    <property type="match status" value="1"/>
</dbReference>
<dbReference type="InterPro" id="IPR006176">
    <property type="entry name" value="3-OHacyl-CoA_DH_NAD-bd"/>
</dbReference>
<dbReference type="InterPro" id="IPR006108">
    <property type="entry name" value="3HC_DH_C"/>
</dbReference>
<dbReference type="InterPro" id="IPR008927">
    <property type="entry name" value="6-PGluconate_DH-like_C_sf"/>
</dbReference>
<dbReference type="InterPro" id="IPR013328">
    <property type="entry name" value="6PGD_dom2"/>
</dbReference>
<dbReference type="InterPro" id="IPR026578">
    <property type="entry name" value="L-carnitine_dehydrogenase"/>
</dbReference>
<dbReference type="InterPro" id="IPR036291">
    <property type="entry name" value="NAD(P)-bd_dom_sf"/>
</dbReference>
<dbReference type="PANTHER" id="PTHR48075">
    <property type="entry name" value="3-HYDROXYACYL-COA DEHYDROGENASE FAMILY PROTEIN"/>
    <property type="match status" value="1"/>
</dbReference>
<dbReference type="PANTHER" id="PTHR48075:SF5">
    <property type="entry name" value="3-HYDROXYBUTYRYL-COA DEHYDROGENASE"/>
    <property type="match status" value="1"/>
</dbReference>
<dbReference type="Pfam" id="PF00725">
    <property type="entry name" value="3HCDH"/>
    <property type="match status" value="1"/>
</dbReference>
<dbReference type="Pfam" id="PF02737">
    <property type="entry name" value="3HCDH_N"/>
    <property type="match status" value="1"/>
</dbReference>
<dbReference type="SUPFAM" id="SSF48179">
    <property type="entry name" value="6-phosphogluconate dehydrogenase C-terminal domain-like"/>
    <property type="match status" value="1"/>
</dbReference>
<dbReference type="SUPFAM" id="SSF51735">
    <property type="entry name" value="NAD(P)-binding Rossmann-fold domains"/>
    <property type="match status" value="1"/>
</dbReference>
<feature type="chain" id="PRO_0000417910" description="L-carnitine dehydrogenase">
    <location>
        <begin position="1"/>
        <end position="335"/>
    </location>
</feature>
<feature type="binding site" evidence="1">
    <location>
        <begin position="29"/>
        <end position="34"/>
    </location>
    <ligand>
        <name>NAD(+)</name>
        <dbReference type="ChEBI" id="CHEBI:57540"/>
    </ligand>
</feature>